<organism>
    <name type="scientific">Shewanella sp. (strain W3-18-1)</name>
    <dbReference type="NCBI Taxonomy" id="351745"/>
    <lineage>
        <taxon>Bacteria</taxon>
        <taxon>Pseudomonadati</taxon>
        <taxon>Pseudomonadota</taxon>
        <taxon>Gammaproteobacteria</taxon>
        <taxon>Alteromonadales</taxon>
        <taxon>Shewanellaceae</taxon>
        <taxon>Shewanella</taxon>
    </lineage>
</organism>
<accession>A1RK88</accession>
<dbReference type="EMBL" id="CP000503">
    <property type="protein sequence ID" value="ABM25083.1"/>
    <property type="molecule type" value="Genomic_DNA"/>
</dbReference>
<dbReference type="RefSeq" id="WP_011789549.1">
    <property type="nucleotide sequence ID" value="NC_008750.1"/>
</dbReference>
<dbReference type="SMR" id="A1RK88"/>
<dbReference type="KEGG" id="shw:Sputw3181_2259"/>
<dbReference type="HOGENOM" id="CLU_155118_1_0_6"/>
<dbReference type="Proteomes" id="UP000002597">
    <property type="component" value="Chromosome"/>
</dbReference>
<dbReference type="Gene3D" id="3.10.510.20">
    <property type="entry name" value="YcgL domain"/>
    <property type="match status" value="1"/>
</dbReference>
<dbReference type="HAMAP" id="MF_01866">
    <property type="entry name" value="UPF0745"/>
    <property type="match status" value="1"/>
</dbReference>
<dbReference type="InterPro" id="IPR038068">
    <property type="entry name" value="YcgL-like_sf"/>
</dbReference>
<dbReference type="InterPro" id="IPR027354">
    <property type="entry name" value="YcgL_dom"/>
</dbReference>
<dbReference type="PANTHER" id="PTHR38109">
    <property type="entry name" value="PROTEIN YCGL"/>
    <property type="match status" value="1"/>
</dbReference>
<dbReference type="PANTHER" id="PTHR38109:SF1">
    <property type="entry name" value="PROTEIN YCGL"/>
    <property type="match status" value="1"/>
</dbReference>
<dbReference type="Pfam" id="PF05166">
    <property type="entry name" value="YcgL"/>
    <property type="match status" value="1"/>
</dbReference>
<dbReference type="SUPFAM" id="SSF160191">
    <property type="entry name" value="YcgL-like"/>
    <property type="match status" value="1"/>
</dbReference>
<dbReference type="PROSITE" id="PS51648">
    <property type="entry name" value="YCGL"/>
    <property type="match status" value="1"/>
</dbReference>
<gene>
    <name type="ordered locus">Sputw3181_2259</name>
</gene>
<reference key="1">
    <citation type="submission" date="2006-12" db="EMBL/GenBank/DDBJ databases">
        <title>Complete sequence of Shewanella sp. W3-18-1.</title>
        <authorList>
            <consortium name="US DOE Joint Genome Institute"/>
            <person name="Copeland A."/>
            <person name="Lucas S."/>
            <person name="Lapidus A."/>
            <person name="Barry K."/>
            <person name="Detter J.C."/>
            <person name="Glavina del Rio T."/>
            <person name="Hammon N."/>
            <person name="Israni S."/>
            <person name="Dalin E."/>
            <person name="Tice H."/>
            <person name="Pitluck S."/>
            <person name="Chain P."/>
            <person name="Malfatti S."/>
            <person name="Shin M."/>
            <person name="Vergez L."/>
            <person name="Schmutz J."/>
            <person name="Larimer F."/>
            <person name="Land M."/>
            <person name="Hauser L."/>
            <person name="Kyrpides N."/>
            <person name="Lykidis A."/>
            <person name="Tiedje J."/>
            <person name="Richardson P."/>
        </authorList>
    </citation>
    <scope>NUCLEOTIDE SEQUENCE [LARGE SCALE GENOMIC DNA]</scope>
    <source>
        <strain>W3-18-1</strain>
    </source>
</reference>
<sequence>MLCTVYKSTRKADTYLFVKKRDCFDDVPEALMAMFGTPQLVMVFPIAKRESLGMADIHKVRAAIDENGYYLQIPPPQVNLLAEHKRNLGLQD</sequence>
<evidence type="ECO:0000255" key="1">
    <source>
        <dbReference type="HAMAP-Rule" id="MF_01866"/>
    </source>
</evidence>
<name>Y2259_SHESW</name>
<proteinExistence type="inferred from homology"/>
<protein>
    <recommendedName>
        <fullName evidence="1">YcgL domain-containing protein Sputw3181_2259</fullName>
    </recommendedName>
</protein>
<feature type="chain" id="PRO_0000375380" description="YcgL domain-containing protein Sputw3181_2259">
    <location>
        <begin position="1"/>
        <end position="92"/>
    </location>
</feature>
<feature type="domain" description="YcgL" evidence="1">
    <location>
        <begin position="1"/>
        <end position="85"/>
    </location>
</feature>